<keyword id="KW-0687">Ribonucleoprotein</keyword>
<keyword id="KW-0689">Ribosomal protein</keyword>
<keyword id="KW-0694">RNA-binding</keyword>
<keyword id="KW-0699">rRNA-binding</keyword>
<dbReference type="EMBL" id="CP001277">
    <property type="protein sequence ID" value="ACQ68458.1"/>
    <property type="molecule type" value="Genomic_DNA"/>
</dbReference>
<dbReference type="RefSeq" id="WP_015874222.1">
    <property type="nucleotide sequence ID" value="NC_012751.1"/>
</dbReference>
<dbReference type="SMR" id="C4K7B5"/>
<dbReference type="STRING" id="572265.HDEF_1863"/>
<dbReference type="GeneID" id="66261448"/>
<dbReference type="KEGG" id="hde:HDEF_1863"/>
<dbReference type="eggNOG" id="COG0090">
    <property type="taxonomic scope" value="Bacteria"/>
</dbReference>
<dbReference type="HOGENOM" id="CLU_036235_2_1_6"/>
<dbReference type="Proteomes" id="UP000002334">
    <property type="component" value="Chromosome"/>
</dbReference>
<dbReference type="GO" id="GO:0005829">
    <property type="term" value="C:cytosol"/>
    <property type="evidence" value="ECO:0007669"/>
    <property type="project" value="UniProtKB-ARBA"/>
</dbReference>
<dbReference type="GO" id="GO:0015934">
    <property type="term" value="C:large ribosomal subunit"/>
    <property type="evidence" value="ECO:0007669"/>
    <property type="project" value="InterPro"/>
</dbReference>
<dbReference type="GO" id="GO:0019843">
    <property type="term" value="F:rRNA binding"/>
    <property type="evidence" value="ECO:0007669"/>
    <property type="project" value="UniProtKB-UniRule"/>
</dbReference>
<dbReference type="GO" id="GO:0003735">
    <property type="term" value="F:structural constituent of ribosome"/>
    <property type="evidence" value="ECO:0007669"/>
    <property type="project" value="InterPro"/>
</dbReference>
<dbReference type="GO" id="GO:0016740">
    <property type="term" value="F:transferase activity"/>
    <property type="evidence" value="ECO:0007669"/>
    <property type="project" value="InterPro"/>
</dbReference>
<dbReference type="GO" id="GO:0002181">
    <property type="term" value="P:cytoplasmic translation"/>
    <property type="evidence" value="ECO:0007669"/>
    <property type="project" value="TreeGrafter"/>
</dbReference>
<dbReference type="FunFam" id="2.30.30.30:FF:000001">
    <property type="entry name" value="50S ribosomal protein L2"/>
    <property type="match status" value="1"/>
</dbReference>
<dbReference type="FunFam" id="2.40.50.140:FF:000003">
    <property type="entry name" value="50S ribosomal protein L2"/>
    <property type="match status" value="1"/>
</dbReference>
<dbReference type="FunFam" id="4.10.950.10:FF:000001">
    <property type="entry name" value="50S ribosomal protein L2"/>
    <property type="match status" value="1"/>
</dbReference>
<dbReference type="Gene3D" id="2.30.30.30">
    <property type="match status" value="1"/>
</dbReference>
<dbReference type="Gene3D" id="2.40.50.140">
    <property type="entry name" value="Nucleic acid-binding proteins"/>
    <property type="match status" value="1"/>
</dbReference>
<dbReference type="Gene3D" id="4.10.950.10">
    <property type="entry name" value="Ribosomal protein L2, domain 3"/>
    <property type="match status" value="1"/>
</dbReference>
<dbReference type="HAMAP" id="MF_01320_B">
    <property type="entry name" value="Ribosomal_uL2_B"/>
    <property type="match status" value="1"/>
</dbReference>
<dbReference type="InterPro" id="IPR012340">
    <property type="entry name" value="NA-bd_OB-fold"/>
</dbReference>
<dbReference type="InterPro" id="IPR014722">
    <property type="entry name" value="Rib_uL2_dom2"/>
</dbReference>
<dbReference type="InterPro" id="IPR002171">
    <property type="entry name" value="Ribosomal_uL2"/>
</dbReference>
<dbReference type="InterPro" id="IPR005880">
    <property type="entry name" value="Ribosomal_uL2_bac/org-type"/>
</dbReference>
<dbReference type="InterPro" id="IPR022669">
    <property type="entry name" value="Ribosomal_uL2_C"/>
</dbReference>
<dbReference type="InterPro" id="IPR022671">
    <property type="entry name" value="Ribosomal_uL2_CS"/>
</dbReference>
<dbReference type="InterPro" id="IPR014726">
    <property type="entry name" value="Ribosomal_uL2_dom3"/>
</dbReference>
<dbReference type="InterPro" id="IPR022666">
    <property type="entry name" value="Ribosomal_uL2_RNA-bd_dom"/>
</dbReference>
<dbReference type="InterPro" id="IPR008991">
    <property type="entry name" value="Translation_prot_SH3-like_sf"/>
</dbReference>
<dbReference type="NCBIfam" id="TIGR01171">
    <property type="entry name" value="rplB_bact"/>
    <property type="match status" value="1"/>
</dbReference>
<dbReference type="PANTHER" id="PTHR13691:SF5">
    <property type="entry name" value="LARGE RIBOSOMAL SUBUNIT PROTEIN UL2M"/>
    <property type="match status" value="1"/>
</dbReference>
<dbReference type="PANTHER" id="PTHR13691">
    <property type="entry name" value="RIBOSOMAL PROTEIN L2"/>
    <property type="match status" value="1"/>
</dbReference>
<dbReference type="Pfam" id="PF00181">
    <property type="entry name" value="Ribosomal_L2"/>
    <property type="match status" value="1"/>
</dbReference>
<dbReference type="Pfam" id="PF03947">
    <property type="entry name" value="Ribosomal_L2_C"/>
    <property type="match status" value="1"/>
</dbReference>
<dbReference type="PIRSF" id="PIRSF002158">
    <property type="entry name" value="Ribosomal_L2"/>
    <property type="match status" value="1"/>
</dbReference>
<dbReference type="SMART" id="SM01383">
    <property type="entry name" value="Ribosomal_L2"/>
    <property type="match status" value="1"/>
</dbReference>
<dbReference type="SMART" id="SM01382">
    <property type="entry name" value="Ribosomal_L2_C"/>
    <property type="match status" value="1"/>
</dbReference>
<dbReference type="SUPFAM" id="SSF50249">
    <property type="entry name" value="Nucleic acid-binding proteins"/>
    <property type="match status" value="1"/>
</dbReference>
<dbReference type="SUPFAM" id="SSF50104">
    <property type="entry name" value="Translation proteins SH3-like domain"/>
    <property type="match status" value="1"/>
</dbReference>
<dbReference type="PROSITE" id="PS00467">
    <property type="entry name" value="RIBOSOMAL_L2"/>
    <property type="match status" value="1"/>
</dbReference>
<sequence length="274" mass="30312">MAVVKCKPTSPGRRHVVKVVNSELHKGKPYRPLLTKLCKTGGRNNRGCITTRHIGGGHKQHYRLIDFKRNKDGISALVERLEYDPCRSANVALLLYSDGERRYILAPKDLKKGDKVQSGVDVAIKAGNTLPMSNIPIGSTVHNVEMKPGKGAQIARSAGSYVQIIAREGFYVTLRLRSGEIRKIHSDCRATLGEVGNAEHMLRVLGKAGAKRWRGIRPTVRGTAMNPVDHPHGGGEGRNFGKHPVTPWGVQTKGKKTRNNKRTDKSIVRRRSKK</sequence>
<accession>C4K7B5</accession>
<comment type="function">
    <text evidence="1">One of the primary rRNA binding proteins. Required for association of the 30S and 50S subunits to form the 70S ribosome, for tRNA binding and peptide bond formation. It has been suggested to have peptidyltransferase activity; this is somewhat controversial. Makes several contacts with the 16S rRNA in the 70S ribosome.</text>
</comment>
<comment type="subunit">
    <text evidence="1">Part of the 50S ribosomal subunit. Forms a bridge to the 30S subunit in the 70S ribosome.</text>
</comment>
<comment type="similarity">
    <text evidence="1">Belongs to the universal ribosomal protein uL2 family.</text>
</comment>
<protein>
    <recommendedName>
        <fullName evidence="1">Large ribosomal subunit protein uL2</fullName>
    </recommendedName>
    <alternativeName>
        <fullName evidence="3">50S ribosomal protein L2</fullName>
    </alternativeName>
</protein>
<name>RL2_HAMD5</name>
<organism>
    <name type="scientific">Hamiltonella defensa subsp. Acyrthosiphon pisum (strain 5AT)</name>
    <dbReference type="NCBI Taxonomy" id="572265"/>
    <lineage>
        <taxon>Bacteria</taxon>
        <taxon>Pseudomonadati</taxon>
        <taxon>Pseudomonadota</taxon>
        <taxon>Gammaproteobacteria</taxon>
        <taxon>Enterobacterales</taxon>
        <taxon>Enterobacteriaceae</taxon>
        <taxon>aphid secondary symbionts</taxon>
        <taxon>Candidatus Hamiltonella</taxon>
    </lineage>
</organism>
<reference key="1">
    <citation type="journal article" date="2009" name="Proc. Natl. Acad. Sci. U.S.A.">
        <title>Hamiltonella defensa, genome evolution of protective bacterial endosymbiont from pathogenic ancestors.</title>
        <authorList>
            <person name="Degnan P.H."/>
            <person name="Yu Y."/>
            <person name="Sisneros N."/>
            <person name="Wing R.A."/>
            <person name="Moran N.A."/>
        </authorList>
    </citation>
    <scope>NUCLEOTIDE SEQUENCE [LARGE SCALE GENOMIC DNA]</scope>
    <source>
        <strain>5AT</strain>
    </source>
</reference>
<proteinExistence type="inferred from homology"/>
<feature type="chain" id="PRO_1000214450" description="Large ribosomal subunit protein uL2">
    <location>
        <begin position="1"/>
        <end position="274"/>
    </location>
</feature>
<feature type="region of interest" description="Disordered" evidence="2">
    <location>
        <begin position="221"/>
        <end position="274"/>
    </location>
</feature>
<evidence type="ECO:0000255" key="1">
    <source>
        <dbReference type="HAMAP-Rule" id="MF_01320"/>
    </source>
</evidence>
<evidence type="ECO:0000256" key="2">
    <source>
        <dbReference type="SAM" id="MobiDB-lite"/>
    </source>
</evidence>
<evidence type="ECO:0000305" key="3"/>
<gene>
    <name evidence="1" type="primary">rplB</name>
    <name type="ordered locus">HDEF_1863</name>
</gene>